<protein>
    <recommendedName>
        <fullName>Histidine biosynthesis bifunctional protein HisIE</fullName>
    </recommendedName>
    <domain>
        <recommendedName>
            <fullName>Phosphoribosyl-AMP cyclohydrolase</fullName>
            <shortName>PRA-CH</shortName>
            <ecNumber>3.5.4.19</ecNumber>
        </recommendedName>
    </domain>
    <domain>
        <recommendedName>
            <fullName>Phosphoribosyl-ATP pyrophosphatase</fullName>
            <shortName>PRA-PH</shortName>
            <ecNumber>3.6.1.31</ecNumber>
        </recommendedName>
    </domain>
</protein>
<evidence type="ECO:0000305" key="1"/>
<dbReference type="EC" id="3.5.4.19"/>
<dbReference type="EC" id="3.6.1.31"/>
<dbReference type="EMBL" id="X13462">
    <property type="protein sequence ID" value="CAA31818.1"/>
    <property type="molecule type" value="Genomic_DNA"/>
</dbReference>
<dbReference type="EMBL" id="X03974">
    <property type="protein sequence ID" value="CAA27613.1"/>
    <property type="molecule type" value="Genomic_DNA"/>
</dbReference>
<dbReference type="EMBL" id="U02072">
    <property type="protein sequence ID" value="AAA19744.1"/>
    <property type="molecule type" value="Unassigned_DNA"/>
</dbReference>
<dbReference type="EMBL" id="D43637">
    <property type="protein sequence ID" value="BAA07753.1"/>
    <property type="molecule type" value="Genomic_DNA"/>
</dbReference>
<dbReference type="EMBL" id="U00096">
    <property type="protein sequence ID" value="AAC75087.1"/>
    <property type="molecule type" value="Genomic_DNA"/>
</dbReference>
<dbReference type="EMBL" id="AP009048">
    <property type="protein sequence ID" value="BAA15858.1"/>
    <property type="molecule type" value="Genomic_DNA"/>
</dbReference>
<dbReference type="PIR" id="JS0135">
    <property type="entry name" value="YNECHI"/>
</dbReference>
<dbReference type="RefSeq" id="NP_416530.1">
    <property type="nucleotide sequence ID" value="NC_000913.3"/>
</dbReference>
<dbReference type="RefSeq" id="WP_000954911.1">
    <property type="nucleotide sequence ID" value="NZ_SSUR01000003.1"/>
</dbReference>
<dbReference type="SMR" id="P06989"/>
<dbReference type="BioGRID" id="4260421">
    <property type="interactions" value="36"/>
</dbReference>
<dbReference type="DIP" id="DIP-9907N"/>
<dbReference type="FunCoup" id="P06989">
    <property type="interactions" value="378"/>
</dbReference>
<dbReference type="IntAct" id="P06989">
    <property type="interactions" value="15"/>
</dbReference>
<dbReference type="STRING" id="511145.b2026"/>
<dbReference type="jPOST" id="P06989"/>
<dbReference type="PaxDb" id="511145-b2026"/>
<dbReference type="EnsemblBacteria" id="AAC75087">
    <property type="protein sequence ID" value="AAC75087"/>
    <property type="gene ID" value="b2026"/>
</dbReference>
<dbReference type="GeneID" id="946515"/>
<dbReference type="KEGG" id="ecj:JW2008"/>
<dbReference type="KEGG" id="eco:b2026"/>
<dbReference type="KEGG" id="ecoc:C3026_11420"/>
<dbReference type="PATRIC" id="fig|1411691.4.peg.226"/>
<dbReference type="EchoBASE" id="EB0446"/>
<dbReference type="eggNOG" id="COG0139">
    <property type="taxonomic scope" value="Bacteria"/>
</dbReference>
<dbReference type="eggNOG" id="COG0140">
    <property type="taxonomic scope" value="Bacteria"/>
</dbReference>
<dbReference type="HOGENOM" id="CLU_048577_3_1_6"/>
<dbReference type="InParanoid" id="P06989"/>
<dbReference type="OMA" id="ERSCFHQ"/>
<dbReference type="OrthoDB" id="9795769at2"/>
<dbReference type="PhylomeDB" id="P06989"/>
<dbReference type="BioCyc" id="EcoCyc:HISTCYCLOPRATPPHOS"/>
<dbReference type="BioCyc" id="MetaCyc:HISTCYCLOPRATPPHOS"/>
<dbReference type="UniPathway" id="UPA00031">
    <property type="reaction ID" value="UER00007"/>
</dbReference>
<dbReference type="UniPathway" id="UPA00031">
    <property type="reaction ID" value="UER00008"/>
</dbReference>
<dbReference type="PRO" id="PR:P06989"/>
<dbReference type="Proteomes" id="UP000000625">
    <property type="component" value="Chromosome"/>
</dbReference>
<dbReference type="GO" id="GO:0005829">
    <property type="term" value="C:cytosol"/>
    <property type="evidence" value="ECO:0000314"/>
    <property type="project" value="EcoCyc"/>
</dbReference>
<dbReference type="GO" id="GO:0005524">
    <property type="term" value="F:ATP binding"/>
    <property type="evidence" value="ECO:0007669"/>
    <property type="project" value="UniProtKB-KW"/>
</dbReference>
<dbReference type="GO" id="GO:0004635">
    <property type="term" value="F:phosphoribosyl-AMP cyclohydrolase activity"/>
    <property type="evidence" value="ECO:0000250"/>
    <property type="project" value="EcoCyc"/>
</dbReference>
<dbReference type="GO" id="GO:0004636">
    <property type="term" value="F:phosphoribosyl-ATP diphosphatase activity"/>
    <property type="evidence" value="ECO:0000316"/>
    <property type="project" value="EcoCyc"/>
</dbReference>
<dbReference type="GO" id="GO:0000105">
    <property type="term" value="P:L-histidine biosynthetic process"/>
    <property type="evidence" value="ECO:0000315"/>
    <property type="project" value="EcoCyc"/>
</dbReference>
<dbReference type="CDD" id="cd11534">
    <property type="entry name" value="NTP-PPase_HisIE_like"/>
    <property type="match status" value="1"/>
</dbReference>
<dbReference type="FunFam" id="1.10.287.1080:FF:000002">
    <property type="entry name" value="Histidine biosynthesis bifunctional protein HisIE"/>
    <property type="match status" value="1"/>
</dbReference>
<dbReference type="FunFam" id="3.10.20.810:FF:000001">
    <property type="entry name" value="Histidine biosynthesis bifunctional protein HisIE"/>
    <property type="match status" value="1"/>
</dbReference>
<dbReference type="Gene3D" id="1.10.287.1080">
    <property type="entry name" value="MazG-like"/>
    <property type="match status" value="1"/>
</dbReference>
<dbReference type="Gene3D" id="3.10.20.810">
    <property type="entry name" value="Phosphoribosyl-AMP cyclohydrolase"/>
    <property type="match status" value="1"/>
</dbReference>
<dbReference type="HAMAP" id="MF_01020">
    <property type="entry name" value="HisE"/>
    <property type="match status" value="1"/>
</dbReference>
<dbReference type="HAMAP" id="MF_01019">
    <property type="entry name" value="HisIE"/>
    <property type="match status" value="1"/>
</dbReference>
<dbReference type="InterPro" id="IPR023019">
    <property type="entry name" value="His_synth_HisIE"/>
</dbReference>
<dbReference type="InterPro" id="IPR008179">
    <property type="entry name" value="HisE"/>
</dbReference>
<dbReference type="InterPro" id="IPR021130">
    <property type="entry name" value="PRib-ATP_PPHydrolase-like"/>
</dbReference>
<dbReference type="InterPro" id="IPR002496">
    <property type="entry name" value="PRib_AMP_CycHydrolase_dom"/>
</dbReference>
<dbReference type="InterPro" id="IPR038019">
    <property type="entry name" value="PRib_AMP_CycHydrolase_sf"/>
</dbReference>
<dbReference type="NCBIfam" id="TIGR03188">
    <property type="entry name" value="histidine_hisI"/>
    <property type="match status" value="1"/>
</dbReference>
<dbReference type="NCBIfam" id="NF000768">
    <property type="entry name" value="PRK00051.1"/>
    <property type="match status" value="1"/>
</dbReference>
<dbReference type="NCBIfam" id="NF002747">
    <property type="entry name" value="PRK02759.1"/>
    <property type="match status" value="1"/>
</dbReference>
<dbReference type="PANTHER" id="PTHR42945">
    <property type="entry name" value="HISTIDINE BIOSYNTHESIS BIFUNCTIONAL PROTEIN"/>
    <property type="match status" value="1"/>
</dbReference>
<dbReference type="PANTHER" id="PTHR42945:SF9">
    <property type="entry name" value="HISTIDINE BIOSYNTHESIS BIFUNCTIONAL PROTEIN HISIE"/>
    <property type="match status" value="1"/>
</dbReference>
<dbReference type="Pfam" id="PF01502">
    <property type="entry name" value="PRA-CH"/>
    <property type="match status" value="1"/>
</dbReference>
<dbReference type="Pfam" id="PF01503">
    <property type="entry name" value="PRA-PH"/>
    <property type="match status" value="1"/>
</dbReference>
<dbReference type="SUPFAM" id="SSF101386">
    <property type="entry name" value="all-alpha NTP pyrophosphatases"/>
    <property type="match status" value="1"/>
</dbReference>
<dbReference type="SUPFAM" id="SSF141734">
    <property type="entry name" value="HisI-like"/>
    <property type="match status" value="1"/>
</dbReference>
<proteinExistence type="inferred from homology"/>
<comment type="catalytic activity">
    <reaction>
        <text>1-(5-phospho-beta-D-ribosyl)-ATP + H2O = 1-(5-phospho-beta-D-ribosyl)-5'-AMP + diphosphate + H(+)</text>
        <dbReference type="Rhea" id="RHEA:22828"/>
        <dbReference type="ChEBI" id="CHEBI:15377"/>
        <dbReference type="ChEBI" id="CHEBI:15378"/>
        <dbReference type="ChEBI" id="CHEBI:33019"/>
        <dbReference type="ChEBI" id="CHEBI:59457"/>
        <dbReference type="ChEBI" id="CHEBI:73183"/>
        <dbReference type="EC" id="3.6.1.31"/>
    </reaction>
</comment>
<comment type="catalytic activity">
    <reaction>
        <text>1-(5-phospho-beta-D-ribosyl)-5'-AMP + H2O = 1-(5-phospho-beta-D-ribosyl)-5-[(5-phospho-beta-D-ribosylamino)methylideneamino]imidazole-4-carboxamide</text>
        <dbReference type="Rhea" id="RHEA:20049"/>
        <dbReference type="ChEBI" id="CHEBI:15377"/>
        <dbReference type="ChEBI" id="CHEBI:58435"/>
        <dbReference type="ChEBI" id="CHEBI:59457"/>
        <dbReference type="EC" id="3.5.4.19"/>
    </reaction>
</comment>
<comment type="pathway">
    <text>Amino-acid biosynthesis; L-histidine biosynthesis; L-histidine from 5-phospho-alpha-D-ribose 1-diphosphate: step 2/9.</text>
</comment>
<comment type="pathway">
    <text>Amino-acid biosynthesis; L-histidine biosynthesis; L-histidine from 5-phospho-alpha-D-ribose 1-diphosphate: step 3/9.</text>
</comment>
<comment type="subcellular location">
    <subcellularLocation>
        <location>Cytoplasm</location>
    </subcellularLocation>
</comment>
<comment type="similarity">
    <text evidence="1">In the N-terminal section; belongs to the PRA-CH family.</text>
</comment>
<comment type="similarity">
    <text evidence="1">In the C-terminal section; belongs to the PRA-PH family.</text>
</comment>
<feature type="chain" id="PRO_0000136411" description="Histidine biosynthesis bifunctional protein HisIE">
    <location>
        <begin position="1"/>
        <end position="203"/>
    </location>
</feature>
<feature type="region of interest" description="Phosphoribosyl-AMP cyclohydrolase">
    <location>
        <begin position="1"/>
        <end position="114"/>
    </location>
</feature>
<feature type="region of interest" description="Phosphoribosyl-ATP pyrophosphohydrolase">
    <location>
        <begin position="115"/>
        <end position="203"/>
    </location>
</feature>
<feature type="sequence variant" description="In strain: F719.">
    <original>Q</original>
    <variation>L</variation>
    <location>
        <position position="5"/>
    </location>
</feature>
<feature type="sequence variant" description="In strain: F719.">
    <original>L</original>
    <variation>I</variation>
    <location>
        <position position="46"/>
    </location>
</feature>
<feature type="sequence variant" description="In strain: F719.">
    <original>H</original>
    <variation>N</variation>
    <location>
        <position position="164"/>
    </location>
</feature>
<feature type="sequence variant" description="In strain: F719.">
    <original>TT</original>
    <variation>GE</variation>
    <location>
        <begin position="192"/>
        <end position="193"/>
    </location>
</feature>
<feature type="sequence variant" description="In strain: F719.">
    <original>E</original>
    <variation>D</variation>
    <location>
        <position position="196"/>
    </location>
</feature>
<feature type="sequence variant" description="In strain: F719.">
    <original>RK</original>
    <variation>KN</variation>
    <location>
        <begin position="199"/>
        <end position="200"/>
    </location>
</feature>
<feature type="sequence variant" description="In strain: F719.">
    <location>
        <position position="203"/>
    </location>
</feature>
<feature type="sequence conflict" description="In Ref. 1; CAA31818." evidence="1" ref="1">
    <original>S</original>
    <variation>P</variation>
    <location>
        <position position="68"/>
    </location>
</feature>
<feature type="sequence conflict" description="In Ref. 1 and 2." evidence="1" ref="1 2">
    <original>T</original>
    <variation>P</variation>
    <location>
        <position position="193"/>
    </location>
</feature>
<organism>
    <name type="scientific">Escherichia coli (strain K12)</name>
    <dbReference type="NCBI Taxonomy" id="83333"/>
    <lineage>
        <taxon>Bacteria</taxon>
        <taxon>Pseudomonadati</taxon>
        <taxon>Pseudomonadota</taxon>
        <taxon>Gammaproteobacteria</taxon>
        <taxon>Enterobacterales</taxon>
        <taxon>Enterobacteriaceae</taxon>
        <taxon>Escherichia</taxon>
    </lineage>
</organism>
<gene>
    <name type="primary">hisI</name>
    <name type="synonym">hisIE</name>
    <name type="ordered locus">b2026</name>
    <name type="ordered locus">JW2008</name>
</gene>
<keyword id="KW-0028">Amino-acid biosynthesis</keyword>
<keyword id="KW-0067">ATP-binding</keyword>
<keyword id="KW-0963">Cytoplasm</keyword>
<keyword id="KW-0368">Histidine biosynthesis</keyword>
<keyword id="KW-0378">Hydrolase</keyword>
<keyword id="KW-0511">Multifunctional enzyme</keyword>
<keyword id="KW-0547">Nucleotide-binding</keyword>
<keyword id="KW-1185">Reference proteome</keyword>
<accession>P06989</accession>
<accession>P78079</accession>
<accession>Q47596</accession>
<reference key="1">
    <citation type="journal article" date="1988" name="J. Mol. Biol.">
        <title>Structure and function of the Salmonella typhimurium and Escherichia coli K-12 histidine operons.</title>
        <authorList>
            <person name="Carlomagno M.S."/>
            <person name="Chiariotti L."/>
            <person name="Alifano P."/>
            <person name="Nappo A.G."/>
            <person name="Bruni C.B."/>
        </authorList>
    </citation>
    <scope>NUCLEOTIDE SEQUENCE [GENOMIC DNA]</scope>
    <source>
        <strain>K12</strain>
    </source>
</reference>
<reference key="2">
    <citation type="journal article" date="1986" name="Mol. Gen. Genet.">
        <title>Nucleotide sequence of the Escherichia coli hisD gene and of the Escherichia coli and Salmonella typhimurium hisIE region.</title>
        <authorList>
            <person name="Chiariotti L."/>
            <person name="Alifano P."/>
            <person name="Carlomagno M.S."/>
            <person name="Bruni C.B."/>
        </authorList>
    </citation>
    <scope>NUCLEOTIDE SEQUENCE [GENOMIC DNA]</scope>
</reference>
<reference key="3">
    <citation type="journal article" date="1994" name="J. Mol. Biol.">
        <title>Nucleotide sequence of the Escherichia coli K12 histidine operon revisited.</title>
        <authorList>
            <person name="Jovanovic G."/>
            <person name="Kostic T."/>
            <person name="Jankovic M."/>
            <person name="Savic D.J."/>
        </authorList>
    </citation>
    <scope>NUCLEOTIDE SEQUENCE [GENOMIC DNA]</scope>
    <scope>SEQUENCE REVISION</scope>
    <source>
        <strain>K12</strain>
    </source>
</reference>
<reference key="4">
    <citation type="journal article" date="1995" name="J. Bacteriol.">
        <title>Expression of the O9 polysaccharide of Escherichia coli: sequencing of the E. coli O9 rfb gene cluster, characterization of mannosyl transferases, and evidence for an ATP-binding cassette transport system.</title>
        <authorList>
            <person name="Kido N."/>
            <person name="Torgov V.I."/>
            <person name="Sugiyama T."/>
            <person name="Uchiya K."/>
            <person name="Sugihara H."/>
            <person name="Komatsu T."/>
            <person name="Kato N."/>
            <person name="Jann K."/>
        </authorList>
    </citation>
    <scope>NUCLEOTIDE SEQUENCE [GENOMIC DNA]</scope>
    <source>
        <strain>O9:K31-:H- / F719</strain>
    </source>
</reference>
<reference key="5">
    <citation type="journal article" date="1996" name="DNA Res.">
        <title>A 460-kb DNA sequence of the Escherichia coli K-12 genome corresponding to the 40.1-50.0 min region on the linkage map.</title>
        <authorList>
            <person name="Itoh T."/>
            <person name="Aiba H."/>
            <person name="Baba T."/>
            <person name="Fujita K."/>
            <person name="Hayashi K."/>
            <person name="Inada T."/>
            <person name="Isono K."/>
            <person name="Kasai H."/>
            <person name="Kimura S."/>
            <person name="Kitakawa M."/>
            <person name="Kitagawa M."/>
            <person name="Makino K."/>
            <person name="Miki T."/>
            <person name="Mizobuchi K."/>
            <person name="Mori H."/>
            <person name="Mori T."/>
            <person name="Motomura K."/>
            <person name="Nakade S."/>
            <person name="Nakamura Y."/>
            <person name="Nashimoto H."/>
            <person name="Nishio Y."/>
            <person name="Oshima T."/>
            <person name="Saito N."/>
            <person name="Sampei G."/>
            <person name="Seki Y."/>
            <person name="Sivasundaram S."/>
            <person name="Tagami H."/>
            <person name="Takeda J."/>
            <person name="Takemoto K."/>
            <person name="Wada C."/>
            <person name="Yamamoto Y."/>
            <person name="Horiuchi T."/>
        </authorList>
    </citation>
    <scope>NUCLEOTIDE SEQUENCE [LARGE SCALE GENOMIC DNA]</scope>
    <source>
        <strain>K12 / W3110 / ATCC 27325 / DSM 5911</strain>
    </source>
</reference>
<reference key="6">
    <citation type="journal article" date="1997" name="Science">
        <title>The complete genome sequence of Escherichia coli K-12.</title>
        <authorList>
            <person name="Blattner F.R."/>
            <person name="Plunkett G. III"/>
            <person name="Bloch C.A."/>
            <person name="Perna N.T."/>
            <person name="Burland V."/>
            <person name="Riley M."/>
            <person name="Collado-Vides J."/>
            <person name="Glasner J.D."/>
            <person name="Rode C.K."/>
            <person name="Mayhew G.F."/>
            <person name="Gregor J."/>
            <person name="Davis N.W."/>
            <person name="Kirkpatrick H.A."/>
            <person name="Goeden M.A."/>
            <person name="Rose D.J."/>
            <person name="Mau B."/>
            <person name="Shao Y."/>
        </authorList>
    </citation>
    <scope>NUCLEOTIDE SEQUENCE [LARGE SCALE GENOMIC DNA]</scope>
    <source>
        <strain>K12 / MG1655 / ATCC 47076</strain>
    </source>
</reference>
<reference key="7">
    <citation type="journal article" date="2006" name="Mol. Syst. Biol.">
        <title>Highly accurate genome sequences of Escherichia coli K-12 strains MG1655 and W3110.</title>
        <authorList>
            <person name="Hayashi K."/>
            <person name="Morooka N."/>
            <person name="Yamamoto Y."/>
            <person name="Fujita K."/>
            <person name="Isono K."/>
            <person name="Choi S."/>
            <person name="Ohtsubo E."/>
            <person name="Baba T."/>
            <person name="Wanner B.L."/>
            <person name="Mori H."/>
            <person name="Horiuchi T."/>
        </authorList>
    </citation>
    <scope>NUCLEOTIDE SEQUENCE [LARGE SCALE GENOMIC DNA]</scope>
    <source>
        <strain>K12 / W3110 / ATCC 27325 / DSM 5911</strain>
    </source>
</reference>
<name>HIS2_ECOLI</name>
<sequence length="203" mass="22756">MLTEQQRRELDWEKTDGLMPVIVQHAVSGEVLMLGYMNPEALDKTLESGKVTFFSRTKQRLWTKGETSGNFLNVVSIAPDCDNDTLLVLANPIGPTCHKGTSSCFGDTAHQWLFLYQLEQLLAERKSADPETSYTAKLYASGTKRIAQKVGEEGVETALAATVHDRFELTNEASDLMYHLLVLLQDQGLDLTTVIENLRKRHQ</sequence>